<organism>
    <name type="scientific">Hahella chejuensis (strain KCTC 2396)</name>
    <dbReference type="NCBI Taxonomy" id="349521"/>
    <lineage>
        <taxon>Bacteria</taxon>
        <taxon>Pseudomonadati</taxon>
        <taxon>Pseudomonadota</taxon>
        <taxon>Gammaproteobacteria</taxon>
        <taxon>Oceanospirillales</taxon>
        <taxon>Hahellaceae</taxon>
        <taxon>Hahella</taxon>
    </lineage>
</organism>
<keyword id="KW-0328">Glycosyltransferase</keyword>
<keyword id="KW-1185">Reference proteome</keyword>
<keyword id="KW-0808">Transferase</keyword>
<name>TYPH_HAHCH</name>
<gene>
    <name type="ordered locus">HCH_01516</name>
</gene>
<sequence>MQQRELNYLFLKRIGINTHQEPVVYMRQDCHVCRSEGFNAHSRVRVTTNKRSIIATVHQVTDGWLSHQEAGLSDAAWRLLEAEDGEVAYFSHTKAVDSMSHVRGKLYGASLTQESADEVVKDVAGGLYSDVQLAAFVTACAGSRLNQDEVAALTSAMVKVGQRIDWGTSPIMDKHCVGGLPGNRTTPIVVAIVTACGLRMPKTSSRAITSPAGTADTMETMAPVNLTLAQMKKVVEQEGGCIAWGGSVSLSPADDVLIRIERALDLDSEGQLVASVISKKVAAGSTHVLIDIPIGMTAKVRSPEYAERLASHMRYTGVKLGIQVEAMFTDGAQPVGRGIGPALEARDILAVLRNQAEAPADLRVRALTLAGRLLEIGGVASHGAGVARARETLESGAALHKFMAICEAQGGFREPALAPHCYEATADRVGVVSFVNNRFVAKLAKLAGAPSNSSAGVDFHVKLGQKVRVGEPLFSIYAEAPGELAYALDFLRDHPNEIRIEEESL</sequence>
<evidence type="ECO:0000255" key="1">
    <source>
        <dbReference type="HAMAP-Rule" id="MF_00703"/>
    </source>
</evidence>
<comment type="catalytic activity">
    <reaction evidence="1">
        <text>thymidine + phosphate = 2-deoxy-alpha-D-ribose 1-phosphate + thymine</text>
        <dbReference type="Rhea" id="RHEA:16037"/>
        <dbReference type="ChEBI" id="CHEBI:17748"/>
        <dbReference type="ChEBI" id="CHEBI:17821"/>
        <dbReference type="ChEBI" id="CHEBI:43474"/>
        <dbReference type="ChEBI" id="CHEBI:57259"/>
        <dbReference type="EC" id="2.4.2.4"/>
    </reaction>
</comment>
<comment type="similarity">
    <text evidence="1">Belongs to the thymidine/pyrimidine-nucleoside phosphorylase family. Type 2 subfamily.</text>
</comment>
<protein>
    <recommendedName>
        <fullName evidence="1">Putative thymidine phosphorylase</fullName>
        <ecNumber evidence="1">2.4.2.4</ecNumber>
    </recommendedName>
    <alternativeName>
        <fullName evidence="1">TdRPase</fullName>
    </alternativeName>
</protein>
<accession>Q2SLV0</accession>
<proteinExistence type="inferred from homology"/>
<feature type="chain" id="PRO_0000314699" description="Putative thymidine phosphorylase">
    <location>
        <begin position="1"/>
        <end position="505"/>
    </location>
</feature>
<dbReference type="EC" id="2.4.2.4" evidence="1"/>
<dbReference type="EMBL" id="CP000155">
    <property type="protein sequence ID" value="ABC28374.1"/>
    <property type="molecule type" value="Genomic_DNA"/>
</dbReference>
<dbReference type="RefSeq" id="WP_011395447.1">
    <property type="nucleotide sequence ID" value="NC_007645.1"/>
</dbReference>
<dbReference type="SMR" id="Q2SLV0"/>
<dbReference type="STRING" id="349521.HCH_01516"/>
<dbReference type="KEGG" id="hch:HCH_01516"/>
<dbReference type="eggNOG" id="COG0213">
    <property type="taxonomic scope" value="Bacteria"/>
</dbReference>
<dbReference type="HOGENOM" id="CLU_025040_6_0_6"/>
<dbReference type="OrthoDB" id="341217at2"/>
<dbReference type="Proteomes" id="UP000000238">
    <property type="component" value="Chromosome"/>
</dbReference>
<dbReference type="GO" id="GO:0005829">
    <property type="term" value="C:cytosol"/>
    <property type="evidence" value="ECO:0007669"/>
    <property type="project" value="TreeGrafter"/>
</dbReference>
<dbReference type="GO" id="GO:0004645">
    <property type="term" value="F:1,4-alpha-oligoglucan phosphorylase activity"/>
    <property type="evidence" value="ECO:0007669"/>
    <property type="project" value="InterPro"/>
</dbReference>
<dbReference type="GO" id="GO:0009032">
    <property type="term" value="F:thymidine phosphorylase activity"/>
    <property type="evidence" value="ECO:0007669"/>
    <property type="project" value="UniProtKB-UniRule"/>
</dbReference>
<dbReference type="GO" id="GO:0006206">
    <property type="term" value="P:pyrimidine nucleobase metabolic process"/>
    <property type="evidence" value="ECO:0007669"/>
    <property type="project" value="InterPro"/>
</dbReference>
<dbReference type="GO" id="GO:0006213">
    <property type="term" value="P:pyrimidine nucleoside metabolic process"/>
    <property type="evidence" value="ECO:0007669"/>
    <property type="project" value="InterPro"/>
</dbReference>
<dbReference type="Gene3D" id="1.20.970.50">
    <property type="match status" value="1"/>
</dbReference>
<dbReference type="Gene3D" id="3.40.1030.10">
    <property type="entry name" value="Nucleoside phosphorylase/phosphoribosyltransferase catalytic domain"/>
    <property type="match status" value="1"/>
</dbReference>
<dbReference type="Gene3D" id="3.90.1170.30">
    <property type="entry name" value="Pyrimidine nucleoside phosphorylase-like, C-terminal domain"/>
    <property type="match status" value="1"/>
</dbReference>
<dbReference type="HAMAP" id="MF_00703">
    <property type="entry name" value="Thymid_phosp_2"/>
    <property type="match status" value="1"/>
</dbReference>
<dbReference type="InterPro" id="IPR000312">
    <property type="entry name" value="Glycosyl_Trfase_fam3"/>
</dbReference>
<dbReference type="InterPro" id="IPR017459">
    <property type="entry name" value="Glycosyl_Trfase_fam3_N_dom"/>
</dbReference>
<dbReference type="InterPro" id="IPR036320">
    <property type="entry name" value="Glycosyl_Trfase_fam3_N_dom_sf"/>
</dbReference>
<dbReference type="InterPro" id="IPR035902">
    <property type="entry name" value="Nuc_phospho_transferase"/>
</dbReference>
<dbReference type="InterPro" id="IPR036566">
    <property type="entry name" value="PYNP-like_C_sf"/>
</dbReference>
<dbReference type="InterPro" id="IPR013102">
    <property type="entry name" value="PYNP_C"/>
</dbReference>
<dbReference type="InterPro" id="IPR017872">
    <property type="entry name" value="Pyrmidine_PPase_CS"/>
</dbReference>
<dbReference type="InterPro" id="IPR028579">
    <property type="entry name" value="Thym_Pase_Put"/>
</dbReference>
<dbReference type="InterPro" id="IPR013466">
    <property type="entry name" value="Thymidine/AMP_Pase"/>
</dbReference>
<dbReference type="InterPro" id="IPR000053">
    <property type="entry name" value="Thymidine/pyrmidine_PPase"/>
</dbReference>
<dbReference type="NCBIfam" id="TIGR02645">
    <property type="entry name" value="ARCH_P_rylase"/>
    <property type="match status" value="1"/>
</dbReference>
<dbReference type="NCBIfam" id="NF003338">
    <property type="entry name" value="PRK04350.1"/>
    <property type="match status" value="1"/>
</dbReference>
<dbReference type="PANTHER" id="PTHR10515">
    <property type="entry name" value="THYMIDINE PHOSPHORYLASE"/>
    <property type="match status" value="1"/>
</dbReference>
<dbReference type="PANTHER" id="PTHR10515:SF0">
    <property type="entry name" value="THYMIDINE PHOSPHORYLASE"/>
    <property type="match status" value="1"/>
</dbReference>
<dbReference type="Pfam" id="PF02885">
    <property type="entry name" value="Glycos_trans_3N"/>
    <property type="match status" value="1"/>
</dbReference>
<dbReference type="Pfam" id="PF00591">
    <property type="entry name" value="Glycos_transf_3"/>
    <property type="match status" value="1"/>
</dbReference>
<dbReference type="Pfam" id="PF07831">
    <property type="entry name" value="PYNP_C"/>
    <property type="match status" value="1"/>
</dbReference>
<dbReference type="SMART" id="SM00941">
    <property type="entry name" value="PYNP_C"/>
    <property type="match status" value="1"/>
</dbReference>
<dbReference type="SUPFAM" id="SSF52418">
    <property type="entry name" value="Nucleoside phosphorylase/phosphoribosyltransferase catalytic domain"/>
    <property type="match status" value="1"/>
</dbReference>
<dbReference type="SUPFAM" id="SSF47648">
    <property type="entry name" value="Nucleoside phosphorylase/phosphoribosyltransferase N-terminal domain"/>
    <property type="match status" value="1"/>
</dbReference>
<dbReference type="SUPFAM" id="SSF54680">
    <property type="entry name" value="Pyrimidine nucleoside phosphorylase C-terminal domain"/>
    <property type="match status" value="1"/>
</dbReference>
<dbReference type="PROSITE" id="PS00647">
    <property type="entry name" value="THYMID_PHOSPHORYLASE"/>
    <property type="match status" value="1"/>
</dbReference>
<reference key="1">
    <citation type="journal article" date="2005" name="Nucleic Acids Res.">
        <title>Genomic blueprint of Hahella chejuensis, a marine microbe producing an algicidal agent.</title>
        <authorList>
            <person name="Jeong H."/>
            <person name="Yim J.H."/>
            <person name="Lee C."/>
            <person name="Choi S.-H."/>
            <person name="Park Y.K."/>
            <person name="Yoon S.H."/>
            <person name="Hur C.-G."/>
            <person name="Kang H.-Y."/>
            <person name="Kim D."/>
            <person name="Lee H.H."/>
            <person name="Park K.H."/>
            <person name="Park S.-H."/>
            <person name="Park H.-S."/>
            <person name="Lee H.K."/>
            <person name="Oh T.K."/>
            <person name="Kim J.F."/>
        </authorList>
    </citation>
    <scope>NUCLEOTIDE SEQUENCE [LARGE SCALE GENOMIC DNA]</scope>
    <source>
        <strain>KCTC 2396</strain>
    </source>
</reference>